<comment type="similarity">
    <text evidence="1">Belongs to the bacterial ribosomal protein bL33 family.</text>
</comment>
<gene>
    <name evidence="1" type="primary">rpmG</name>
    <name type="ordered locus">SPO2965</name>
</gene>
<reference key="1">
    <citation type="journal article" date="2004" name="Nature">
        <title>Genome sequence of Silicibacter pomeroyi reveals adaptations to the marine environment.</title>
        <authorList>
            <person name="Moran M.A."/>
            <person name="Buchan A."/>
            <person name="Gonzalez J.M."/>
            <person name="Heidelberg J.F."/>
            <person name="Whitman W.B."/>
            <person name="Kiene R.P."/>
            <person name="Henriksen J.R."/>
            <person name="King G.M."/>
            <person name="Belas R."/>
            <person name="Fuqua C."/>
            <person name="Brinkac L.M."/>
            <person name="Lewis M."/>
            <person name="Johri S."/>
            <person name="Weaver B."/>
            <person name="Pai G."/>
            <person name="Eisen J.A."/>
            <person name="Rahe E."/>
            <person name="Sheldon W.M."/>
            <person name="Ye W."/>
            <person name="Miller T.R."/>
            <person name="Carlton J."/>
            <person name="Rasko D.A."/>
            <person name="Paulsen I.T."/>
            <person name="Ren Q."/>
            <person name="Daugherty S.C."/>
            <person name="DeBoy R.T."/>
            <person name="Dodson R.J."/>
            <person name="Durkin A.S."/>
            <person name="Madupu R."/>
            <person name="Nelson W.C."/>
            <person name="Sullivan S.A."/>
            <person name="Rosovitz M.J."/>
            <person name="Haft D.H."/>
            <person name="Selengut J."/>
            <person name="Ward N."/>
        </authorList>
    </citation>
    <scope>NUCLEOTIDE SEQUENCE [LARGE SCALE GENOMIC DNA]</scope>
    <source>
        <strain>ATCC 700808 / DSM 15171 / DSS-3</strain>
    </source>
</reference>
<reference key="2">
    <citation type="journal article" date="2014" name="Stand. Genomic Sci.">
        <title>An updated genome annotation for the model marine bacterium Ruegeria pomeroyi DSS-3.</title>
        <authorList>
            <person name="Rivers A.R."/>
            <person name="Smith C.B."/>
            <person name="Moran M.A."/>
        </authorList>
    </citation>
    <scope>GENOME REANNOTATION</scope>
    <source>
        <strain>ATCC 700808 / DSM 15171 / DSS-3</strain>
    </source>
</reference>
<proteinExistence type="inferred from homology"/>
<protein>
    <recommendedName>
        <fullName evidence="1">Large ribosomal subunit protein bL33</fullName>
    </recommendedName>
    <alternativeName>
        <fullName evidence="2">50S ribosomal protein L33</fullName>
    </alternativeName>
</protein>
<accession>Q5LP83</accession>
<sequence>MAKPTTIKIRLNSTAGTGHFYVTKKNARTMTEKMTVRKYDPVVRKHVEYKEGKIK</sequence>
<organism>
    <name type="scientific">Ruegeria pomeroyi (strain ATCC 700808 / DSM 15171 / DSS-3)</name>
    <name type="common">Silicibacter pomeroyi</name>
    <dbReference type="NCBI Taxonomy" id="246200"/>
    <lineage>
        <taxon>Bacteria</taxon>
        <taxon>Pseudomonadati</taxon>
        <taxon>Pseudomonadota</taxon>
        <taxon>Alphaproteobacteria</taxon>
        <taxon>Rhodobacterales</taxon>
        <taxon>Roseobacteraceae</taxon>
        <taxon>Ruegeria</taxon>
    </lineage>
</organism>
<feature type="chain" id="PRO_0000356669" description="Large ribosomal subunit protein bL33">
    <location>
        <begin position="1"/>
        <end position="55"/>
    </location>
</feature>
<keyword id="KW-1185">Reference proteome</keyword>
<keyword id="KW-0687">Ribonucleoprotein</keyword>
<keyword id="KW-0689">Ribosomal protein</keyword>
<evidence type="ECO:0000255" key="1">
    <source>
        <dbReference type="HAMAP-Rule" id="MF_00294"/>
    </source>
</evidence>
<evidence type="ECO:0000305" key="2"/>
<dbReference type="EMBL" id="CP000031">
    <property type="protein sequence ID" value="AAV97118.1"/>
    <property type="molecule type" value="Genomic_DNA"/>
</dbReference>
<dbReference type="RefSeq" id="WP_007799108.1">
    <property type="nucleotide sequence ID" value="NC_003911.12"/>
</dbReference>
<dbReference type="SMR" id="Q5LP83"/>
<dbReference type="STRING" id="246200.SPO2965"/>
<dbReference type="PaxDb" id="246200-SPO2965"/>
<dbReference type="GeneID" id="92506156"/>
<dbReference type="KEGG" id="sil:SPO2965"/>
<dbReference type="eggNOG" id="COG0267">
    <property type="taxonomic scope" value="Bacteria"/>
</dbReference>
<dbReference type="HOGENOM" id="CLU_190949_1_1_5"/>
<dbReference type="OrthoDB" id="21586at2"/>
<dbReference type="Proteomes" id="UP000001023">
    <property type="component" value="Chromosome"/>
</dbReference>
<dbReference type="GO" id="GO:0022625">
    <property type="term" value="C:cytosolic large ribosomal subunit"/>
    <property type="evidence" value="ECO:0007669"/>
    <property type="project" value="TreeGrafter"/>
</dbReference>
<dbReference type="GO" id="GO:0003735">
    <property type="term" value="F:structural constituent of ribosome"/>
    <property type="evidence" value="ECO:0007669"/>
    <property type="project" value="InterPro"/>
</dbReference>
<dbReference type="GO" id="GO:0006412">
    <property type="term" value="P:translation"/>
    <property type="evidence" value="ECO:0007669"/>
    <property type="project" value="UniProtKB-UniRule"/>
</dbReference>
<dbReference type="Gene3D" id="2.20.28.120">
    <property type="entry name" value="Ribosomal protein L33"/>
    <property type="match status" value="1"/>
</dbReference>
<dbReference type="HAMAP" id="MF_00294">
    <property type="entry name" value="Ribosomal_bL33"/>
    <property type="match status" value="1"/>
</dbReference>
<dbReference type="InterPro" id="IPR001705">
    <property type="entry name" value="Ribosomal_bL33"/>
</dbReference>
<dbReference type="InterPro" id="IPR018264">
    <property type="entry name" value="Ribosomal_bL33_CS"/>
</dbReference>
<dbReference type="InterPro" id="IPR038584">
    <property type="entry name" value="Ribosomal_bL33_sf"/>
</dbReference>
<dbReference type="InterPro" id="IPR011332">
    <property type="entry name" value="Ribosomal_zn-bd"/>
</dbReference>
<dbReference type="NCBIfam" id="NF001860">
    <property type="entry name" value="PRK00595.1"/>
    <property type="match status" value="1"/>
</dbReference>
<dbReference type="NCBIfam" id="TIGR01023">
    <property type="entry name" value="rpmG_bact"/>
    <property type="match status" value="1"/>
</dbReference>
<dbReference type="PANTHER" id="PTHR15238">
    <property type="entry name" value="54S RIBOSOMAL PROTEIN L39, MITOCHONDRIAL"/>
    <property type="match status" value="1"/>
</dbReference>
<dbReference type="PANTHER" id="PTHR15238:SF1">
    <property type="entry name" value="LARGE RIBOSOMAL SUBUNIT PROTEIN BL33M"/>
    <property type="match status" value="1"/>
</dbReference>
<dbReference type="Pfam" id="PF00471">
    <property type="entry name" value="Ribosomal_L33"/>
    <property type="match status" value="1"/>
</dbReference>
<dbReference type="SUPFAM" id="SSF57829">
    <property type="entry name" value="Zn-binding ribosomal proteins"/>
    <property type="match status" value="1"/>
</dbReference>
<dbReference type="PROSITE" id="PS00582">
    <property type="entry name" value="RIBOSOMAL_L33"/>
    <property type="match status" value="1"/>
</dbReference>
<name>RL33_RUEPO</name>